<evidence type="ECO:0000250" key="1"/>
<evidence type="ECO:0000255" key="2"/>
<evidence type="ECO:0000305" key="3"/>
<protein>
    <recommendedName>
        <fullName>Putative branched-chain amino acid carrier protein MW1297</fullName>
    </recommendedName>
</protein>
<reference key="1">
    <citation type="journal article" date="2002" name="Lancet">
        <title>Genome and virulence determinants of high virulence community-acquired MRSA.</title>
        <authorList>
            <person name="Baba T."/>
            <person name="Takeuchi F."/>
            <person name="Kuroda M."/>
            <person name="Yuzawa H."/>
            <person name="Aoki K."/>
            <person name="Oguchi A."/>
            <person name="Nagai Y."/>
            <person name="Iwama N."/>
            <person name="Asano K."/>
            <person name="Naimi T."/>
            <person name="Kuroda H."/>
            <person name="Cui L."/>
            <person name="Yamamoto K."/>
            <person name="Hiramatsu K."/>
        </authorList>
    </citation>
    <scope>NUCLEOTIDE SEQUENCE [LARGE SCALE GENOMIC DNA]</scope>
    <source>
        <strain>MW2</strain>
    </source>
</reference>
<dbReference type="EMBL" id="BA000033">
    <property type="protein sequence ID" value="BAB95162.1"/>
    <property type="molecule type" value="Genomic_DNA"/>
</dbReference>
<dbReference type="KEGG" id="sam:MW1297"/>
<dbReference type="HOGENOM" id="CLU_036807_0_1_9"/>
<dbReference type="GO" id="GO:0005886">
    <property type="term" value="C:plasma membrane"/>
    <property type="evidence" value="ECO:0007669"/>
    <property type="project" value="UniProtKB-SubCell"/>
</dbReference>
<dbReference type="GO" id="GO:0015188">
    <property type="term" value="F:L-isoleucine transmembrane transporter activity"/>
    <property type="evidence" value="ECO:0007669"/>
    <property type="project" value="TreeGrafter"/>
</dbReference>
<dbReference type="GO" id="GO:0015190">
    <property type="term" value="F:L-leucine transmembrane transporter activity"/>
    <property type="evidence" value="ECO:0007669"/>
    <property type="project" value="TreeGrafter"/>
</dbReference>
<dbReference type="GO" id="GO:0005304">
    <property type="term" value="F:L-valine transmembrane transporter activity"/>
    <property type="evidence" value="ECO:0007669"/>
    <property type="project" value="TreeGrafter"/>
</dbReference>
<dbReference type="GO" id="GO:0015818">
    <property type="term" value="P:isoleucine transport"/>
    <property type="evidence" value="ECO:0007669"/>
    <property type="project" value="TreeGrafter"/>
</dbReference>
<dbReference type="GO" id="GO:0015820">
    <property type="term" value="P:L-leucine transport"/>
    <property type="evidence" value="ECO:0007669"/>
    <property type="project" value="TreeGrafter"/>
</dbReference>
<dbReference type="FunFam" id="1.20.1740.10:FF:000068">
    <property type="entry name" value="Branched-chain amino acid transport system carrier protein"/>
    <property type="match status" value="1"/>
</dbReference>
<dbReference type="Gene3D" id="1.20.1740.10">
    <property type="entry name" value="Amino acid/polyamine transporter I"/>
    <property type="match status" value="1"/>
</dbReference>
<dbReference type="InterPro" id="IPR004685">
    <property type="entry name" value="Brnchd-chn_aa_trnsp_Livcs"/>
</dbReference>
<dbReference type="NCBIfam" id="TIGR00796">
    <property type="entry name" value="livcs"/>
    <property type="match status" value="1"/>
</dbReference>
<dbReference type="PANTHER" id="PTHR30588:SF7">
    <property type="entry name" value="BRANCHED-CHAIN AMINO ACID CARRIER PROTEIN SAOUHSC_01411-RELATED"/>
    <property type="match status" value="1"/>
</dbReference>
<dbReference type="PANTHER" id="PTHR30588">
    <property type="entry name" value="BRANCHED-CHAIN AMINO ACID TRANSPORT SYSTEM 2 CARRIER PROTEIN"/>
    <property type="match status" value="1"/>
</dbReference>
<dbReference type="Pfam" id="PF05525">
    <property type="entry name" value="Branch_AA_trans"/>
    <property type="match status" value="1"/>
</dbReference>
<proteinExistence type="inferred from homology"/>
<comment type="function">
    <text evidence="1 3">Component of the transport system for branched-chain amino acids (leucine, isoleucine and valine), which is coupled to a proton motive force (Potential). Contributes to NaCl tolerance (By similarity).</text>
</comment>
<comment type="subcellular location">
    <subcellularLocation>
        <location evidence="3">Cell membrane</location>
        <topology evidence="3">Multi-pass membrane protein</topology>
    </subcellularLocation>
</comment>
<comment type="similarity">
    <text evidence="3">Belongs to the branched chain amino acid transporter family.</text>
</comment>
<name>BRNQL_STAAW</name>
<organism>
    <name type="scientific">Staphylococcus aureus (strain MW2)</name>
    <dbReference type="NCBI Taxonomy" id="196620"/>
    <lineage>
        <taxon>Bacteria</taxon>
        <taxon>Bacillati</taxon>
        <taxon>Bacillota</taxon>
        <taxon>Bacilli</taxon>
        <taxon>Bacillales</taxon>
        <taxon>Staphylococcaceae</taxon>
        <taxon>Staphylococcus</taxon>
    </lineage>
</organism>
<keyword id="KW-0029">Amino-acid transport</keyword>
<keyword id="KW-1003">Cell membrane</keyword>
<keyword id="KW-0472">Membrane</keyword>
<keyword id="KW-0812">Transmembrane</keyword>
<keyword id="KW-1133">Transmembrane helix</keyword>
<keyword id="KW-0813">Transport</keyword>
<sequence length="447" mass="48815">MNKNTWVIGFTLFAMFFGAGNLIFPPNLGLDSGQFFWPAILAFVLTGIGLPLLGVIVGALDKEGYIGALNKISPKFSILFLIIIYLTIGPLFAIPRTASTSFEMTITPIIHSNSSIALFIFTIIYFIVVLYICLNPSKLIDRIGSLLTPLLLITILAMIIKGYLDFSGNSAGKGNEALYHSNFSSFAEGFTQGYLTMDAIAAIAFSMIVVNAVKLTGITKTNQIFKQTLTAGLIAAVALIFIYISLGYIGNHMPVSDMTLDQLKSKDRNIGTYLLTTMASTGFGSFGKYLLGIIVALACLTTACGLIVAVSEYFHRIVPKVSYKAFVLVFILMSFIIANQGLNAVISMSIPVLSIVYPVAITVVLLILIAKFIPTKRISQQIPVIIVFILSIFSVISKLGWLKINFIESLPLRAYSLEWFPVAIIATILGYLVGIFVKQDPIKYQQE</sequence>
<gene>
    <name type="ordered locus">MW1297</name>
</gene>
<accession>Q7A0W9</accession>
<feature type="chain" id="PRO_0000294016" description="Putative branched-chain amino acid carrier protein MW1297">
    <location>
        <begin position="1"/>
        <end position="447"/>
    </location>
</feature>
<feature type="transmembrane region" description="Helical" evidence="2">
    <location>
        <begin position="6"/>
        <end position="26"/>
    </location>
</feature>
<feature type="transmembrane region" description="Helical" evidence="2">
    <location>
        <begin position="40"/>
        <end position="60"/>
    </location>
</feature>
<feature type="transmembrane region" description="Helical" evidence="2">
    <location>
        <begin position="74"/>
        <end position="94"/>
    </location>
</feature>
<feature type="transmembrane region" description="Helical" evidence="2">
    <location>
        <begin position="114"/>
        <end position="134"/>
    </location>
</feature>
<feature type="transmembrane region" description="Helical" evidence="2">
    <location>
        <begin position="143"/>
        <end position="163"/>
    </location>
</feature>
<feature type="transmembrane region" description="Helical" evidence="2">
    <location>
        <begin position="193"/>
        <end position="213"/>
    </location>
</feature>
<feature type="transmembrane region" description="Helical" evidence="2">
    <location>
        <begin position="229"/>
        <end position="249"/>
    </location>
</feature>
<feature type="transmembrane region" description="Helical" evidence="2">
    <location>
        <begin position="290"/>
        <end position="310"/>
    </location>
</feature>
<feature type="transmembrane region" description="Helical" evidence="2">
    <location>
        <begin position="326"/>
        <end position="346"/>
    </location>
</feature>
<feature type="transmembrane region" description="Helical" evidence="2">
    <location>
        <begin position="350"/>
        <end position="370"/>
    </location>
</feature>
<feature type="transmembrane region" description="Helical" evidence="2">
    <location>
        <begin position="382"/>
        <end position="402"/>
    </location>
</feature>
<feature type="transmembrane region" description="Helical" evidence="2">
    <location>
        <begin position="417"/>
        <end position="437"/>
    </location>
</feature>